<comment type="similarity">
    <text evidence="1">Belongs to the bacterial ribosomal protein bL36 family.</text>
</comment>
<evidence type="ECO:0000255" key="1">
    <source>
        <dbReference type="HAMAP-Rule" id="MF_00251"/>
    </source>
</evidence>
<evidence type="ECO:0000305" key="2"/>
<proteinExistence type="inferred from homology"/>
<organism>
    <name type="scientific">Paracoccus denitrificans (strain Pd 1222)</name>
    <dbReference type="NCBI Taxonomy" id="318586"/>
    <lineage>
        <taxon>Bacteria</taxon>
        <taxon>Pseudomonadati</taxon>
        <taxon>Pseudomonadota</taxon>
        <taxon>Alphaproteobacteria</taxon>
        <taxon>Rhodobacterales</taxon>
        <taxon>Paracoccaceae</taxon>
        <taxon>Paracoccus</taxon>
    </lineage>
</organism>
<protein>
    <recommendedName>
        <fullName evidence="1">Large ribosomal subunit protein bL36</fullName>
    </recommendedName>
    <alternativeName>
        <fullName evidence="2">50S ribosomal protein L36</fullName>
    </alternativeName>
</protein>
<reference key="1">
    <citation type="submission" date="2006-12" db="EMBL/GenBank/DDBJ databases">
        <title>Complete sequence of chromosome 1 of Paracoccus denitrificans PD1222.</title>
        <authorList>
            <person name="Copeland A."/>
            <person name="Lucas S."/>
            <person name="Lapidus A."/>
            <person name="Barry K."/>
            <person name="Detter J.C."/>
            <person name="Glavina del Rio T."/>
            <person name="Hammon N."/>
            <person name="Israni S."/>
            <person name="Dalin E."/>
            <person name="Tice H."/>
            <person name="Pitluck S."/>
            <person name="Munk A.C."/>
            <person name="Brettin T."/>
            <person name="Bruce D."/>
            <person name="Han C."/>
            <person name="Tapia R."/>
            <person name="Gilna P."/>
            <person name="Schmutz J."/>
            <person name="Larimer F."/>
            <person name="Land M."/>
            <person name="Hauser L."/>
            <person name="Kyrpides N."/>
            <person name="Lykidis A."/>
            <person name="Spiro S."/>
            <person name="Richardson D.J."/>
            <person name="Moir J.W.B."/>
            <person name="Ferguson S.J."/>
            <person name="van Spanning R.J.M."/>
            <person name="Richardson P."/>
        </authorList>
    </citation>
    <scope>NUCLEOTIDE SEQUENCE [LARGE SCALE GENOMIC DNA]</scope>
    <source>
        <strain>Pd 1222</strain>
    </source>
</reference>
<gene>
    <name evidence="1" type="primary">rpmJ</name>
    <name type="ordered locus">Pden_0055</name>
</gene>
<dbReference type="EMBL" id="CP000489">
    <property type="protein sequence ID" value="ABL68172.1"/>
    <property type="molecule type" value="Genomic_DNA"/>
</dbReference>
<dbReference type="SMR" id="A1AY28"/>
<dbReference type="STRING" id="318586.Pden_0055"/>
<dbReference type="EnsemblBacteria" id="ABL68172">
    <property type="protein sequence ID" value="ABL68172"/>
    <property type="gene ID" value="Pden_0055"/>
</dbReference>
<dbReference type="KEGG" id="pde:Pden_0055"/>
<dbReference type="eggNOG" id="COG0257">
    <property type="taxonomic scope" value="Bacteria"/>
</dbReference>
<dbReference type="HOGENOM" id="CLU_135723_3_2_5"/>
<dbReference type="OrthoDB" id="9801558at2"/>
<dbReference type="Proteomes" id="UP000000361">
    <property type="component" value="Chromosome 1"/>
</dbReference>
<dbReference type="GO" id="GO:1990904">
    <property type="term" value="C:ribonucleoprotein complex"/>
    <property type="evidence" value="ECO:0007669"/>
    <property type="project" value="UniProtKB-KW"/>
</dbReference>
<dbReference type="GO" id="GO:0005840">
    <property type="term" value="C:ribosome"/>
    <property type="evidence" value="ECO:0007669"/>
    <property type="project" value="UniProtKB-KW"/>
</dbReference>
<dbReference type="GO" id="GO:0003735">
    <property type="term" value="F:structural constituent of ribosome"/>
    <property type="evidence" value="ECO:0007669"/>
    <property type="project" value="InterPro"/>
</dbReference>
<dbReference type="GO" id="GO:0006412">
    <property type="term" value="P:translation"/>
    <property type="evidence" value="ECO:0007669"/>
    <property type="project" value="UniProtKB-UniRule"/>
</dbReference>
<dbReference type="HAMAP" id="MF_00251">
    <property type="entry name" value="Ribosomal_bL36"/>
    <property type="match status" value="1"/>
</dbReference>
<dbReference type="InterPro" id="IPR000473">
    <property type="entry name" value="Ribosomal_bL36"/>
</dbReference>
<dbReference type="InterPro" id="IPR035977">
    <property type="entry name" value="Ribosomal_bL36_sp"/>
</dbReference>
<dbReference type="InterPro" id="IPR047621">
    <property type="entry name" value="Ribosomal_L36_bact"/>
</dbReference>
<dbReference type="NCBIfam" id="NF002021">
    <property type="entry name" value="PRK00831.1"/>
    <property type="match status" value="1"/>
</dbReference>
<dbReference type="NCBIfam" id="TIGR01022">
    <property type="entry name" value="rpmJ_bact"/>
    <property type="match status" value="1"/>
</dbReference>
<dbReference type="PANTHER" id="PTHR47781">
    <property type="entry name" value="50S RIBOSOMAL PROTEIN L36 2"/>
    <property type="match status" value="1"/>
</dbReference>
<dbReference type="PANTHER" id="PTHR47781:SF1">
    <property type="entry name" value="LARGE RIBOSOMAL SUBUNIT PROTEIN BL36B"/>
    <property type="match status" value="1"/>
</dbReference>
<dbReference type="Pfam" id="PF00444">
    <property type="entry name" value="Ribosomal_L36"/>
    <property type="match status" value="1"/>
</dbReference>
<dbReference type="SUPFAM" id="SSF57840">
    <property type="entry name" value="Ribosomal protein L36"/>
    <property type="match status" value="1"/>
</dbReference>
<dbReference type="PROSITE" id="PS00828">
    <property type="entry name" value="RIBOSOMAL_L36"/>
    <property type="match status" value="1"/>
</dbReference>
<keyword id="KW-1185">Reference proteome</keyword>
<keyword id="KW-0687">Ribonucleoprotein</keyword>
<keyword id="KW-0689">Ribosomal protein</keyword>
<sequence length="41" mass="4954">MKVRNSLRSLKSRHRDCQVVRRKGRIYVINKTNPRFKARQG</sequence>
<feature type="chain" id="PRO_0000302260" description="Large ribosomal subunit protein bL36">
    <location>
        <begin position="1"/>
        <end position="41"/>
    </location>
</feature>
<accession>A1AY28</accession>
<name>RL36_PARDP</name>